<proteinExistence type="inferred from homology"/>
<keyword id="KW-0028">Amino-acid biosynthesis</keyword>
<keyword id="KW-0057">Aromatic amino acid biosynthesis</keyword>
<keyword id="KW-0328">Glycosyltransferase</keyword>
<keyword id="KW-0460">Magnesium</keyword>
<keyword id="KW-0479">Metal-binding</keyword>
<keyword id="KW-0808">Transferase</keyword>
<keyword id="KW-0822">Tryptophan biosynthesis</keyword>
<name>TRPD_METPB</name>
<dbReference type="EC" id="2.4.2.18" evidence="1"/>
<dbReference type="EMBL" id="CP001029">
    <property type="protein sequence ID" value="ACB83305.1"/>
    <property type="molecule type" value="Genomic_DNA"/>
</dbReference>
<dbReference type="RefSeq" id="WP_012456901.1">
    <property type="nucleotide sequence ID" value="NC_010725.1"/>
</dbReference>
<dbReference type="SMR" id="B1Z9R9"/>
<dbReference type="STRING" id="441620.Mpop_5211"/>
<dbReference type="KEGG" id="mpo:Mpop_5211"/>
<dbReference type="eggNOG" id="COG0547">
    <property type="taxonomic scope" value="Bacteria"/>
</dbReference>
<dbReference type="HOGENOM" id="CLU_034315_2_1_5"/>
<dbReference type="OrthoDB" id="9806430at2"/>
<dbReference type="UniPathway" id="UPA00035">
    <property type="reaction ID" value="UER00041"/>
</dbReference>
<dbReference type="Proteomes" id="UP000007136">
    <property type="component" value="Chromosome"/>
</dbReference>
<dbReference type="GO" id="GO:0005829">
    <property type="term" value="C:cytosol"/>
    <property type="evidence" value="ECO:0007669"/>
    <property type="project" value="TreeGrafter"/>
</dbReference>
<dbReference type="GO" id="GO:0004048">
    <property type="term" value="F:anthranilate phosphoribosyltransferase activity"/>
    <property type="evidence" value="ECO:0007669"/>
    <property type="project" value="UniProtKB-UniRule"/>
</dbReference>
<dbReference type="GO" id="GO:0000287">
    <property type="term" value="F:magnesium ion binding"/>
    <property type="evidence" value="ECO:0007669"/>
    <property type="project" value="UniProtKB-UniRule"/>
</dbReference>
<dbReference type="GO" id="GO:0000162">
    <property type="term" value="P:L-tryptophan biosynthetic process"/>
    <property type="evidence" value="ECO:0007669"/>
    <property type="project" value="UniProtKB-UniRule"/>
</dbReference>
<dbReference type="FunFam" id="3.40.1030.10:FF:000002">
    <property type="entry name" value="Anthranilate phosphoribosyltransferase"/>
    <property type="match status" value="1"/>
</dbReference>
<dbReference type="Gene3D" id="3.40.1030.10">
    <property type="entry name" value="Nucleoside phosphorylase/phosphoribosyltransferase catalytic domain"/>
    <property type="match status" value="1"/>
</dbReference>
<dbReference type="Gene3D" id="1.20.970.10">
    <property type="entry name" value="Transferase, Pyrimidine Nucleoside Phosphorylase, Chain C"/>
    <property type="match status" value="1"/>
</dbReference>
<dbReference type="HAMAP" id="MF_00211">
    <property type="entry name" value="TrpD"/>
    <property type="match status" value="1"/>
</dbReference>
<dbReference type="InterPro" id="IPR005940">
    <property type="entry name" value="Anthranilate_Pribosyl_Tfrase"/>
</dbReference>
<dbReference type="InterPro" id="IPR000312">
    <property type="entry name" value="Glycosyl_Trfase_fam3"/>
</dbReference>
<dbReference type="InterPro" id="IPR017459">
    <property type="entry name" value="Glycosyl_Trfase_fam3_N_dom"/>
</dbReference>
<dbReference type="InterPro" id="IPR036320">
    <property type="entry name" value="Glycosyl_Trfase_fam3_N_dom_sf"/>
</dbReference>
<dbReference type="InterPro" id="IPR035902">
    <property type="entry name" value="Nuc_phospho_transferase"/>
</dbReference>
<dbReference type="NCBIfam" id="TIGR01245">
    <property type="entry name" value="trpD"/>
    <property type="match status" value="1"/>
</dbReference>
<dbReference type="PANTHER" id="PTHR43285">
    <property type="entry name" value="ANTHRANILATE PHOSPHORIBOSYLTRANSFERASE"/>
    <property type="match status" value="1"/>
</dbReference>
<dbReference type="PANTHER" id="PTHR43285:SF2">
    <property type="entry name" value="ANTHRANILATE PHOSPHORIBOSYLTRANSFERASE"/>
    <property type="match status" value="1"/>
</dbReference>
<dbReference type="Pfam" id="PF02885">
    <property type="entry name" value="Glycos_trans_3N"/>
    <property type="match status" value="1"/>
</dbReference>
<dbReference type="Pfam" id="PF00591">
    <property type="entry name" value="Glycos_transf_3"/>
    <property type="match status" value="1"/>
</dbReference>
<dbReference type="SUPFAM" id="SSF52418">
    <property type="entry name" value="Nucleoside phosphorylase/phosphoribosyltransferase catalytic domain"/>
    <property type="match status" value="1"/>
</dbReference>
<dbReference type="SUPFAM" id="SSF47648">
    <property type="entry name" value="Nucleoside phosphorylase/phosphoribosyltransferase N-terminal domain"/>
    <property type="match status" value="1"/>
</dbReference>
<feature type="chain" id="PRO_1000099820" description="Anthranilate phosphoribosyltransferase">
    <location>
        <begin position="1"/>
        <end position="337"/>
    </location>
</feature>
<feature type="binding site" evidence="1">
    <location>
        <position position="81"/>
    </location>
    <ligand>
        <name>5-phospho-alpha-D-ribose 1-diphosphate</name>
        <dbReference type="ChEBI" id="CHEBI:58017"/>
    </ligand>
</feature>
<feature type="binding site" evidence="1">
    <location>
        <position position="81"/>
    </location>
    <ligand>
        <name>anthranilate</name>
        <dbReference type="ChEBI" id="CHEBI:16567"/>
        <label>1</label>
    </ligand>
</feature>
<feature type="binding site" evidence="1">
    <location>
        <begin position="84"/>
        <end position="85"/>
    </location>
    <ligand>
        <name>5-phospho-alpha-D-ribose 1-diphosphate</name>
        <dbReference type="ChEBI" id="CHEBI:58017"/>
    </ligand>
</feature>
<feature type="binding site" evidence="1">
    <location>
        <position position="89"/>
    </location>
    <ligand>
        <name>5-phospho-alpha-D-ribose 1-diphosphate</name>
        <dbReference type="ChEBI" id="CHEBI:58017"/>
    </ligand>
</feature>
<feature type="binding site" evidence="1">
    <location>
        <begin position="91"/>
        <end position="94"/>
    </location>
    <ligand>
        <name>5-phospho-alpha-D-ribose 1-diphosphate</name>
        <dbReference type="ChEBI" id="CHEBI:58017"/>
    </ligand>
</feature>
<feature type="binding site" evidence="1">
    <location>
        <position position="93"/>
    </location>
    <ligand>
        <name>Mg(2+)</name>
        <dbReference type="ChEBI" id="CHEBI:18420"/>
        <label>1</label>
    </ligand>
</feature>
<feature type="binding site" evidence="1">
    <location>
        <begin position="109"/>
        <end position="117"/>
    </location>
    <ligand>
        <name>5-phospho-alpha-D-ribose 1-diphosphate</name>
        <dbReference type="ChEBI" id="CHEBI:58017"/>
    </ligand>
</feature>
<feature type="binding site" evidence="1">
    <location>
        <position position="112"/>
    </location>
    <ligand>
        <name>anthranilate</name>
        <dbReference type="ChEBI" id="CHEBI:16567"/>
        <label>1</label>
    </ligand>
</feature>
<feature type="binding site" evidence="1">
    <location>
        <position position="121"/>
    </location>
    <ligand>
        <name>5-phospho-alpha-D-ribose 1-diphosphate</name>
        <dbReference type="ChEBI" id="CHEBI:58017"/>
    </ligand>
</feature>
<feature type="binding site" evidence="1">
    <location>
        <position position="167"/>
    </location>
    <ligand>
        <name>anthranilate</name>
        <dbReference type="ChEBI" id="CHEBI:16567"/>
        <label>2</label>
    </ligand>
</feature>
<feature type="binding site" evidence="1">
    <location>
        <position position="226"/>
    </location>
    <ligand>
        <name>Mg(2+)</name>
        <dbReference type="ChEBI" id="CHEBI:18420"/>
        <label>2</label>
    </ligand>
</feature>
<feature type="binding site" evidence="1">
    <location>
        <position position="227"/>
    </location>
    <ligand>
        <name>Mg(2+)</name>
        <dbReference type="ChEBI" id="CHEBI:18420"/>
        <label>1</label>
    </ligand>
</feature>
<feature type="binding site" evidence="1">
    <location>
        <position position="227"/>
    </location>
    <ligand>
        <name>Mg(2+)</name>
        <dbReference type="ChEBI" id="CHEBI:18420"/>
        <label>2</label>
    </ligand>
</feature>
<protein>
    <recommendedName>
        <fullName evidence="1">Anthranilate phosphoribosyltransferase</fullName>
        <ecNumber evidence="1">2.4.2.18</ecNumber>
    </recommendedName>
</protein>
<comment type="function">
    <text evidence="1">Catalyzes the transfer of the phosphoribosyl group of 5-phosphorylribose-1-pyrophosphate (PRPP) to anthranilate to yield N-(5'-phosphoribosyl)-anthranilate (PRA).</text>
</comment>
<comment type="catalytic activity">
    <reaction evidence="1">
        <text>N-(5-phospho-beta-D-ribosyl)anthranilate + diphosphate = 5-phospho-alpha-D-ribose 1-diphosphate + anthranilate</text>
        <dbReference type="Rhea" id="RHEA:11768"/>
        <dbReference type="ChEBI" id="CHEBI:16567"/>
        <dbReference type="ChEBI" id="CHEBI:18277"/>
        <dbReference type="ChEBI" id="CHEBI:33019"/>
        <dbReference type="ChEBI" id="CHEBI:58017"/>
        <dbReference type="EC" id="2.4.2.18"/>
    </reaction>
</comment>
<comment type="cofactor">
    <cofactor evidence="1">
        <name>Mg(2+)</name>
        <dbReference type="ChEBI" id="CHEBI:18420"/>
    </cofactor>
    <text evidence="1">Binds 2 magnesium ions per monomer.</text>
</comment>
<comment type="pathway">
    <text evidence="1">Amino-acid biosynthesis; L-tryptophan biosynthesis; L-tryptophan from chorismate: step 2/5.</text>
</comment>
<comment type="subunit">
    <text evidence="1">Homodimer.</text>
</comment>
<comment type="similarity">
    <text evidence="1">Belongs to the anthranilate phosphoribosyltransferase family.</text>
</comment>
<reference key="1">
    <citation type="submission" date="2008-04" db="EMBL/GenBank/DDBJ databases">
        <title>Complete sequence of chromosome of Methylobacterium populi BJ001.</title>
        <authorList>
            <consortium name="US DOE Joint Genome Institute"/>
            <person name="Copeland A."/>
            <person name="Lucas S."/>
            <person name="Lapidus A."/>
            <person name="Glavina del Rio T."/>
            <person name="Dalin E."/>
            <person name="Tice H."/>
            <person name="Bruce D."/>
            <person name="Goodwin L."/>
            <person name="Pitluck S."/>
            <person name="Chertkov O."/>
            <person name="Brettin T."/>
            <person name="Detter J.C."/>
            <person name="Han C."/>
            <person name="Kuske C.R."/>
            <person name="Schmutz J."/>
            <person name="Larimer F."/>
            <person name="Land M."/>
            <person name="Hauser L."/>
            <person name="Kyrpides N."/>
            <person name="Mikhailova N."/>
            <person name="Marx C."/>
            <person name="Richardson P."/>
        </authorList>
    </citation>
    <scope>NUCLEOTIDE SEQUENCE [LARGE SCALE GENOMIC DNA]</scope>
    <source>
        <strain>ATCC BAA-705 / NCIMB 13946 / BJ001</strain>
    </source>
</reference>
<gene>
    <name evidence="1" type="primary">trpD</name>
    <name type="ordered locus">Mpop_5211</name>
</gene>
<organism>
    <name type="scientific">Methylorubrum populi (strain ATCC BAA-705 / NCIMB 13946 / BJ001)</name>
    <name type="common">Methylobacterium populi</name>
    <dbReference type="NCBI Taxonomy" id="441620"/>
    <lineage>
        <taxon>Bacteria</taxon>
        <taxon>Pseudomonadati</taxon>
        <taxon>Pseudomonadota</taxon>
        <taxon>Alphaproteobacteria</taxon>
        <taxon>Hyphomicrobiales</taxon>
        <taxon>Methylobacteriaceae</taxon>
        <taxon>Methylorubrum</taxon>
    </lineage>
</organism>
<sequence length="337" mass="34121">MDAFKTHLATVASGAALSREQARAAFDDLLSGEVTPIQAGAFLTALSVRGESEDEIVGAVSAMRARMLPVTAPTGAIDIVGTGGDHSGSYNVSTLAAILTAACGVSVAKHGNRAATSRSGAADVLVALGVKIGLPPEALARCLSEAGLCFMFAQTHHGAMRHVAPVRTELPFRTIFNMLGPLSNPAGVTAQVFGVSRPAWAEPLTRVLATLGSRRVWTVHGSDGLDEITTTGPTAVIALEDGALSHFTIDPREVGLPLATLDDLRGGDPDHNAAALSAVLEGARSAYRDIAVLNAGAGLVVAGAAGTLAEGVARAQGAIDSGAARATLARLVAVSNA</sequence>
<accession>B1Z9R9</accession>
<evidence type="ECO:0000255" key="1">
    <source>
        <dbReference type="HAMAP-Rule" id="MF_00211"/>
    </source>
</evidence>